<gene>
    <name type="primary">Usp13</name>
</gene>
<protein>
    <recommendedName>
        <fullName>Ubiquitin carboxyl-terminal hydrolase 13</fullName>
        <ecNumber>3.4.19.12</ecNumber>
    </recommendedName>
    <alternativeName>
        <fullName>Deubiquitinating enzyme 13</fullName>
    </alternativeName>
    <alternativeName>
        <fullName>Ubiquitin thioesterase 13</fullName>
    </alternativeName>
    <alternativeName>
        <fullName>Ubiquitin-specific-processing protease 13</fullName>
    </alternativeName>
</protein>
<evidence type="ECO:0000250" key="1"/>
<evidence type="ECO:0000250" key="2">
    <source>
        <dbReference type="UniProtKB" id="Q92995"/>
    </source>
</evidence>
<evidence type="ECO:0000255" key="3">
    <source>
        <dbReference type="PROSITE-ProRule" id="PRU00212"/>
    </source>
</evidence>
<evidence type="ECO:0000255" key="4">
    <source>
        <dbReference type="PROSITE-ProRule" id="PRU00502"/>
    </source>
</evidence>
<evidence type="ECO:0000255" key="5">
    <source>
        <dbReference type="PROSITE-ProRule" id="PRU10092"/>
    </source>
</evidence>
<evidence type="ECO:0000255" key="6">
    <source>
        <dbReference type="PROSITE-ProRule" id="PRU10093"/>
    </source>
</evidence>
<evidence type="ECO:0000269" key="7">
    <source>
    </source>
</evidence>
<evidence type="ECO:0000269" key="8">
    <source>
    </source>
</evidence>
<evidence type="ECO:0000305" key="9"/>
<accession>Q5BKP2</accession>
<accession>D3YYG7</accession>
<name>UBP13_MOUSE</name>
<sequence length="858" mass="96723">MQRRGALFSVPGGGGKMAAGDLGELLVPHMPTIRVPRSGDRVYKNECAFSYDSPNSEGGLYVCMNTFLAFGREHVERHFRKTGQSVYMHLKRHMREKVRGASGGALPKRRNSKIFLDLDMDDDLNSDDYEYEDEAKLVIFPDHYEIALPNIEELPALVTIACDAVLSSKSPYRKQDPDTWENEVPVSKYANNLVQLDNGVRIPPSGWKCARCDLRENLWLNLTDGSVLCGKWFFDSSGGNGHALEHYRDMGYPLAVKLGTITPDGADVYSFQEEGPVSDPHLAKHLAHFGIDMLHTQGTENGLRDNDIKPRVSEWEVIQESGTKLKPMYGPGYTGLKNLGNSCYLSSVMQAIFSIPEFQRAYVGNLPRIFDYSPLDPTQDFNTQMTKLGHGLLSGQYSKPPVKSELIEQVMKEEHKPQQNGISPRMFKAFVSKSHPEFSSNRQQDAQEFFLHLVNLVERNRIGSENPSDVFRFLVEERIQCCQTRKVRYTERVDYLMQLPVAMEAATNKDELITYELMRREAEANRRPLPELVRAKIPFSACLQAFAEPDNVDDFWSSALQAKSAGVKTSRFASFPEYLVVQIKKFTFGLDWVPRKFDVSIDMPDLLDISHLRARGLQPGEEELPDISPPIVIPDDSKDRLMNQLIDPSDIDESSVMQLAEMGFPLEACRKAVYFTGNTGAEVAFNWIIVHMEEPDFAEPLAIPGYGGAGASVFGATGLDNQPPEEIVAIITSMGFQRNQAVQALQATNHNLERALDWIFSHPEFEEDSDFVIEMENNANANIVSEAKPEGPRVKDGSGMYELFAFISHMGTSTMSGHYVCHIKKEGRWVIYNDHKVCASERPPKDLGYMYFYRRIPS</sequence>
<dbReference type="EC" id="3.4.19.12"/>
<dbReference type="EMBL" id="AC111140">
    <property type="status" value="NOT_ANNOTATED_CDS"/>
    <property type="molecule type" value="Genomic_DNA"/>
</dbReference>
<dbReference type="EMBL" id="CH466530">
    <property type="protein sequence ID" value="EDL35015.1"/>
    <property type="molecule type" value="Genomic_DNA"/>
</dbReference>
<dbReference type="EMBL" id="BC090999">
    <property type="protein sequence ID" value="AAH90999.1"/>
    <property type="molecule type" value="mRNA"/>
</dbReference>
<dbReference type="CCDS" id="CCDS17301.1"/>
<dbReference type="RefSeq" id="NP_001013042.1">
    <property type="nucleotide sequence ID" value="NM_001013024.2"/>
</dbReference>
<dbReference type="SMR" id="Q5BKP2"/>
<dbReference type="BioGRID" id="215466">
    <property type="interactions" value="3"/>
</dbReference>
<dbReference type="FunCoup" id="Q5BKP2">
    <property type="interactions" value="3304"/>
</dbReference>
<dbReference type="STRING" id="10090.ENSMUSP00000072155"/>
<dbReference type="MEROPS" id="C19.012"/>
<dbReference type="iPTMnet" id="Q5BKP2"/>
<dbReference type="PhosphoSitePlus" id="Q5BKP2"/>
<dbReference type="PaxDb" id="10090-ENSMUSP00000072155"/>
<dbReference type="ProteomicsDB" id="298090"/>
<dbReference type="Antibodypedia" id="1352">
    <property type="antibodies" value="330 antibodies from 35 providers"/>
</dbReference>
<dbReference type="DNASU" id="72607"/>
<dbReference type="Ensembl" id="ENSMUST00000072312.12">
    <property type="protein sequence ID" value="ENSMUSP00000072155.6"/>
    <property type="gene ID" value="ENSMUSG00000056900.14"/>
</dbReference>
<dbReference type="GeneID" id="72607"/>
<dbReference type="KEGG" id="mmu:72607"/>
<dbReference type="UCSC" id="uc008owr.1">
    <property type="organism name" value="mouse"/>
</dbReference>
<dbReference type="AGR" id="MGI:1919857"/>
<dbReference type="CTD" id="8975"/>
<dbReference type="MGI" id="MGI:1919857">
    <property type="gene designation" value="Usp13"/>
</dbReference>
<dbReference type="VEuPathDB" id="HostDB:ENSMUSG00000056900"/>
<dbReference type="eggNOG" id="KOG0944">
    <property type="taxonomic scope" value="Eukaryota"/>
</dbReference>
<dbReference type="GeneTree" id="ENSGT00940000157401"/>
<dbReference type="InParanoid" id="Q5BKP2"/>
<dbReference type="OMA" id="ASTECAY"/>
<dbReference type="OrthoDB" id="361536at2759"/>
<dbReference type="PhylomeDB" id="Q5BKP2"/>
<dbReference type="TreeFam" id="TF300576"/>
<dbReference type="Reactome" id="R-MMU-5689880">
    <property type="pathway name" value="Ub-specific processing proteases"/>
</dbReference>
<dbReference type="Reactome" id="R-MMU-8948751">
    <property type="pathway name" value="Regulation of PTEN stability and activity"/>
</dbReference>
<dbReference type="BioGRID-ORCS" id="72607">
    <property type="hits" value="2 hits in 78 CRISPR screens"/>
</dbReference>
<dbReference type="ChiTaRS" id="Usp13">
    <property type="organism name" value="mouse"/>
</dbReference>
<dbReference type="PRO" id="PR:Q5BKP2"/>
<dbReference type="Proteomes" id="UP000000589">
    <property type="component" value="Chromosome 3"/>
</dbReference>
<dbReference type="RNAct" id="Q5BKP2">
    <property type="molecule type" value="protein"/>
</dbReference>
<dbReference type="Bgee" id="ENSMUSG00000056900">
    <property type="expression patterns" value="Expressed in interventricular septum and 198 other cell types or tissues"/>
</dbReference>
<dbReference type="ExpressionAtlas" id="Q5BKP2">
    <property type="expression patterns" value="baseline and differential"/>
</dbReference>
<dbReference type="GO" id="GO:0005737">
    <property type="term" value="C:cytoplasm"/>
    <property type="evidence" value="ECO:0007669"/>
    <property type="project" value="UniProtKB-SubCell"/>
</dbReference>
<dbReference type="GO" id="GO:1904288">
    <property type="term" value="F:BAT3 complex binding"/>
    <property type="evidence" value="ECO:0007669"/>
    <property type="project" value="Ensembl"/>
</dbReference>
<dbReference type="GO" id="GO:0004843">
    <property type="term" value="F:cysteine-type deubiquitinase activity"/>
    <property type="evidence" value="ECO:0000250"/>
    <property type="project" value="UniProtKB"/>
</dbReference>
<dbReference type="GO" id="GO:0004197">
    <property type="term" value="F:cysteine-type endopeptidase activity"/>
    <property type="evidence" value="ECO:0000250"/>
    <property type="project" value="UniProtKB"/>
</dbReference>
<dbReference type="GO" id="GO:1990380">
    <property type="term" value="F:K48-linked deubiquitinase activity"/>
    <property type="evidence" value="ECO:0007669"/>
    <property type="project" value="Ensembl"/>
</dbReference>
<dbReference type="GO" id="GO:0070628">
    <property type="term" value="F:proteasome binding"/>
    <property type="evidence" value="ECO:0007669"/>
    <property type="project" value="Ensembl"/>
</dbReference>
<dbReference type="GO" id="GO:0051087">
    <property type="term" value="F:protein-folding chaperone binding"/>
    <property type="evidence" value="ECO:0007669"/>
    <property type="project" value="Ensembl"/>
</dbReference>
<dbReference type="GO" id="GO:0043130">
    <property type="term" value="F:ubiquitin binding"/>
    <property type="evidence" value="ECO:0000250"/>
    <property type="project" value="UniProtKB"/>
</dbReference>
<dbReference type="GO" id="GO:0031625">
    <property type="term" value="F:ubiquitin protein ligase binding"/>
    <property type="evidence" value="ECO:0007669"/>
    <property type="project" value="Ensembl"/>
</dbReference>
<dbReference type="GO" id="GO:0008270">
    <property type="term" value="F:zinc ion binding"/>
    <property type="evidence" value="ECO:0007669"/>
    <property type="project" value="UniProtKB-KW"/>
</dbReference>
<dbReference type="GO" id="GO:0006914">
    <property type="term" value="P:autophagy"/>
    <property type="evidence" value="ECO:0007669"/>
    <property type="project" value="UniProtKB-KW"/>
</dbReference>
<dbReference type="GO" id="GO:0008283">
    <property type="term" value="P:cell population proliferation"/>
    <property type="evidence" value="ECO:0000250"/>
    <property type="project" value="UniProtKB"/>
</dbReference>
<dbReference type="GO" id="GO:0036506">
    <property type="term" value="P:maintenance of unfolded protein"/>
    <property type="evidence" value="ECO:0007669"/>
    <property type="project" value="Ensembl"/>
</dbReference>
<dbReference type="GO" id="GO:1904294">
    <property type="term" value="P:positive regulation of ERAD pathway"/>
    <property type="evidence" value="ECO:0007669"/>
    <property type="project" value="Ensembl"/>
</dbReference>
<dbReference type="GO" id="GO:0035523">
    <property type="term" value="P:protein K29-linked deubiquitination"/>
    <property type="evidence" value="ECO:0000266"/>
    <property type="project" value="MGI"/>
</dbReference>
<dbReference type="GO" id="GO:0044313">
    <property type="term" value="P:protein K6-linked deubiquitination"/>
    <property type="evidence" value="ECO:0000266"/>
    <property type="project" value="MGI"/>
</dbReference>
<dbReference type="GO" id="GO:0070536">
    <property type="term" value="P:protein K63-linked deubiquitination"/>
    <property type="evidence" value="ECO:0000250"/>
    <property type="project" value="UniProtKB"/>
</dbReference>
<dbReference type="GO" id="GO:0050821">
    <property type="term" value="P:protein stabilization"/>
    <property type="evidence" value="ECO:0000250"/>
    <property type="project" value="UniProtKB"/>
</dbReference>
<dbReference type="GO" id="GO:0006508">
    <property type="term" value="P:proteolysis"/>
    <property type="evidence" value="ECO:0007669"/>
    <property type="project" value="UniProtKB-KW"/>
</dbReference>
<dbReference type="GO" id="GO:0010506">
    <property type="term" value="P:regulation of autophagy"/>
    <property type="evidence" value="ECO:0000250"/>
    <property type="project" value="UniProtKB"/>
</dbReference>
<dbReference type="GO" id="GO:0006355">
    <property type="term" value="P:regulation of DNA-templated transcription"/>
    <property type="evidence" value="ECO:0000250"/>
    <property type="project" value="UniProtKB"/>
</dbReference>
<dbReference type="CDD" id="cd02658">
    <property type="entry name" value="Peptidase_C19B"/>
    <property type="match status" value="1"/>
</dbReference>
<dbReference type="CDD" id="cd14384">
    <property type="entry name" value="UBA1_UBP13"/>
    <property type="match status" value="1"/>
</dbReference>
<dbReference type="CDD" id="cd14386">
    <property type="entry name" value="UBA2_UBP5"/>
    <property type="match status" value="1"/>
</dbReference>
<dbReference type="FunFam" id="1.10.8.10:FF:000016">
    <property type="entry name" value="Ubiquitin carboxyl-terminal hydrolase"/>
    <property type="match status" value="1"/>
</dbReference>
<dbReference type="FunFam" id="1.10.8.10:FF:000047">
    <property type="entry name" value="Ubiquitin carboxyl-terminal hydrolase"/>
    <property type="match status" value="1"/>
</dbReference>
<dbReference type="FunFam" id="3.30.40.10:FF:000026">
    <property type="entry name" value="Ubiquitin carboxyl-terminal hydrolase"/>
    <property type="match status" value="1"/>
</dbReference>
<dbReference type="FunFam" id="3.30.40.10:FF:000770">
    <property type="entry name" value="Ubiquitin carboxyl-terminal hydrolase"/>
    <property type="match status" value="1"/>
</dbReference>
<dbReference type="FunFam" id="3.90.70.10:FF:000042">
    <property type="entry name" value="Ubiquitin carboxyl-terminal hydrolase"/>
    <property type="match status" value="1"/>
</dbReference>
<dbReference type="FunFam" id="3.90.70.10:FF:000063">
    <property type="entry name" value="Ubiquitin carboxyl-terminal hydrolase"/>
    <property type="match status" value="1"/>
</dbReference>
<dbReference type="Gene3D" id="3.90.70.10">
    <property type="entry name" value="Cysteine proteinases"/>
    <property type="match status" value="2"/>
</dbReference>
<dbReference type="Gene3D" id="1.10.8.10">
    <property type="entry name" value="DNA helicase RuvA subunit, C-terminal domain"/>
    <property type="match status" value="2"/>
</dbReference>
<dbReference type="Gene3D" id="3.30.40.10">
    <property type="entry name" value="Zinc/RING finger domain, C3HC4 (zinc finger)"/>
    <property type="match status" value="2"/>
</dbReference>
<dbReference type="InterPro" id="IPR038765">
    <property type="entry name" value="Papain-like_cys_pep_sf"/>
</dbReference>
<dbReference type="InterPro" id="IPR001394">
    <property type="entry name" value="Peptidase_C19_UCH"/>
</dbReference>
<dbReference type="InterPro" id="IPR050185">
    <property type="entry name" value="Ub_carboxyl-term_hydrolase"/>
</dbReference>
<dbReference type="InterPro" id="IPR015940">
    <property type="entry name" value="UBA"/>
</dbReference>
<dbReference type="InterPro" id="IPR009060">
    <property type="entry name" value="UBA-like_sf"/>
</dbReference>
<dbReference type="InterPro" id="IPR016652">
    <property type="entry name" value="Ubiquitinyl_hydrolase"/>
</dbReference>
<dbReference type="InterPro" id="IPR041432">
    <property type="entry name" value="UBP13_Znf-UBP_var"/>
</dbReference>
<dbReference type="InterPro" id="IPR018200">
    <property type="entry name" value="USP_CS"/>
</dbReference>
<dbReference type="InterPro" id="IPR028889">
    <property type="entry name" value="USP_dom"/>
</dbReference>
<dbReference type="InterPro" id="IPR013083">
    <property type="entry name" value="Znf_RING/FYVE/PHD"/>
</dbReference>
<dbReference type="InterPro" id="IPR001607">
    <property type="entry name" value="Znf_UBP"/>
</dbReference>
<dbReference type="PANTHER" id="PTHR21646">
    <property type="entry name" value="UBIQUITIN CARBOXYL-TERMINAL HYDROLASE"/>
    <property type="match status" value="1"/>
</dbReference>
<dbReference type="PANTHER" id="PTHR21646:SF105">
    <property type="entry name" value="UBIQUITIN CARBOXYL-TERMINAL HYDROLASE 13"/>
    <property type="match status" value="1"/>
</dbReference>
<dbReference type="Pfam" id="PF22562">
    <property type="entry name" value="UBA_7"/>
    <property type="match status" value="2"/>
</dbReference>
<dbReference type="Pfam" id="PF00443">
    <property type="entry name" value="UCH"/>
    <property type="match status" value="1"/>
</dbReference>
<dbReference type="Pfam" id="PF02148">
    <property type="entry name" value="zf-UBP"/>
    <property type="match status" value="1"/>
</dbReference>
<dbReference type="Pfam" id="PF17807">
    <property type="entry name" value="zf-UBP_var"/>
    <property type="match status" value="1"/>
</dbReference>
<dbReference type="PIRSF" id="PIRSF016308">
    <property type="entry name" value="UBP"/>
    <property type="match status" value="1"/>
</dbReference>
<dbReference type="SMART" id="SM00165">
    <property type="entry name" value="UBA"/>
    <property type="match status" value="2"/>
</dbReference>
<dbReference type="SMART" id="SM00290">
    <property type="entry name" value="ZnF_UBP"/>
    <property type="match status" value="1"/>
</dbReference>
<dbReference type="SUPFAM" id="SSF54001">
    <property type="entry name" value="Cysteine proteinases"/>
    <property type="match status" value="1"/>
</dbReference>
<dbReference type="SUPFAM" id="SSF57850">
    <property type="entry name" value="RING/U-box"/>
    <property type="match status" value="1"/>
</dbReference>
<dbReference type="SUPFAM" id="SSF46934">
    <property type="entry name" value="UBA-like"/>
    <property type="match status" value="1"/>
</dbReference>
<dbReference type="PROSITE" id="PS50030">
    <property type="entry name" value="UBA"/>
    <property type="match status" value="2"/>
</dbReference>
<dbReference type="PROSITE" id="PS00972">
    <property type="entry name" value="USP_1"/>
    <property type="match status" value="1"/>
</dbReference>
<dbReference type="PROSITE" id="PS00973">
    <property type="entry name" value="USP_2"/>
    <property type="match status" value="1"/>
</dbReference>
<dbReference type="PROSITE" id="PS50235">
    <property type="entry name" value="USP_3"/>
    <property type="match status" value="1"/>
</dbReference>
<dbReference type="PROSITE" id="PS50271">
    <property type="entry name" value="ZF_UBP"/>
    <property type="match status" value="1"/>
</dbReference>
<keyword id="KW-0072">Autophagy</keyword>
<keyword id="KW-0963">Cytoplasm</keyword>
<keyword id="KW-0378">Hydrolase</keyword>
<keyword id="KW-1017">Isopeptide bond</keyword>
<keyword id="KW-0479">Metal-binding</keyword>
<keyword id="KW-0597">Phosphoprotein</keyword>
<keyword id="KW-0645">Protease</keyword>
<keyword id="KW-1185">Reference proteome</keyword>
<keyword id="KW-0677">Repeat</keyword>
<keyword id="KW-0788">Thiol protease</keyword>
<keyword id="KW-0832">Ubl conjugation</keyword>
<keyword id="KW-0833">Ubl conjugation pathway</keyword>
<keyword id="KW-0862">Zinc</keyword>
<keyword id="KW-0863">Zinc-finger</keyword>
<comment type="function">
    <text evidence="2">Deubiquitinase that mediates deubiquitination of target proteins such as BECN1, MITF, SKP2 and USP10 and is involved in various processes such as autophagy, endoplasmic reticulum-associated degradation (ERAD), cell cycle progression or DNA damage response. Component of a regulatory loop that controls autophagy and p53/TP53 levels: mediates deubiquitination of BECN1, a key regulator of autophagy, leading to stabilize the PIK3C3/VPS34-containing complexes. Alternatively, forms with NEDD4 a deubiquitination complex, which subsequently stabilizes VPS34 to promote autophagy. Also deubiquitinates USP10, an essential regulator of p53/TP53 stability. In turn, PIK3C3/VPS34-containing complexes regulate USP13 stability, suggesting the existence of a regulatory system by which PIK3C3/VPS34-containing complexes regulate p53/TP53 protein levels via USP10 and USP13. Recruited by nuclear UFD1 and mediates deubiquitination of SKP2, thereby regulating endoplasmic reticulum-associated degradation (ERAD). Also regulates ERAD through the deubiquitination of UBL4A a component of the BAG6/BAT3 complex. Mediates stabilization of SIAH2 independently of deubiquitinase activity: binds ubiquitinated SIAH2 and acts by impairing SIAH2 autoubiquitination. Regulates the cell cycle progression by stabilizing cell cycle proteins such as SKP2 and AURKB. In addition, plays an important role in maintaining genomic stability and in DNA replication checkpoint activation via regulation of RAP80 and TOPBP1. Deubiquitinates the multifunctional protein HMGB1 and subsequently drives its nucleocytoplasmic localization and its secretion. Positively regulates type I and type II interferon signalings by deubiquitinating STAT1 but negatively regulates antiviral response by deubiquitinating STING1.</text>
</comment>
<comment type="catalytic activity">
    <reaction evidence="2">
        <text>Thiol-dependent hydrolysis of ester, thioester, amide, peptide and isopeptide bonds formed by the C-terminal Gly of ubiquitin (a 76-residue protein attached to proteins as an intracellular targeting signal).</text>
        <dbReference type="EC" id="3.4.19.12"/>
    </reaction>
</comment>
<comment type="activity regulation">
    <text evidence="1">Specifically inhibited by spautin-1 (specific and potent autophagy inhibitor-1), a derivative of MBCQ that binds to USP13 and inhibits deubiquitinase activity. Regulated by PIK3C3/VPS34-containing complexes. The weak deubiquitinase activity in vitro suggests the existence of some mechanism that activates the enzyme (By similarity).</text>
</comment>
<comment type="subunit">
    <text evidence="2">Interacts with UFD1. Interacts (via UBA domains) with SIAH2 (when ubiquitinated). Interacts with BAG6; the interaction is direct and may mediate UBL4A deubiquitination. Interacts (via UBA 2 domain) with AMFR; the interaction is direct. Interacts with UBL4A; may be indirect via BAG6. Interacts with NEDD4.</text>
</comment>
<comment type="subcellular location">
    <subcellularLocation>
        <location evidence="2">Cytoplasm</location>
    </subcellularLocation>
</comment>
<comment type="domain">
    <text evidence="1">The UBP-type zinc finger has lost its ability to bind ubiquitin and USP13 is not activated by unanchored ubiquitin.</text>
</comment>
<comment type="domain">
    <text evidence="1">The UBA domains mediate binding to ubiquitin.</text>
</comment>
<comment type="disruption phenotype">
    <text evidence="7 8">Deficient mice are more resistant than wild-type littermates to lethal HSV-1 infection. In addition, USP13 deficiency impairs autophagy in lungs of aged mice (PubMed:36150040).</text>
</comment>
<comment type="similarity">
    <text evidence="9">Belongs to the peptidase C19 family.</text>
</comment>
<organism>
    <name type="scientific">Mus musculus</name>
    <name type="common">Mouse</name>
    <dbReference type="NCBI Taxonomy" id="10090"/>
    <lineage>
        <taxon>Eukaryota</taxon>
        <taxon>Metazoa</taxon>
        <taxon>Chordata</taxon>
        <taxon>Craniata</taxon>
        <taxon>Vertebrata</taxon>
        <taxon>Euteleostomi</taxon>
        <taxon>Mammalia</taxon>
        <taxon>Eutheria</taxon>
        <taxon>Euarchontoglires</taxon>
        <taxon>Glires</taxon>
        <taxon>Rodentia</taxon>
        <taxon>Myomorpha</taxon>
        <taxon>Muroidea</taxon>
        <taxon>Muridae</taxon>
        <taxon>Murinae</taxon>
        <taxon>Mus</taxon>
        <taxon>Mus</taxon>
    </lineage>
</organism>
<proteinExistence type="evidence at protein level"/>
<feature type="chain" id="PRO_0000418011" description="Ubiquitin carboxyl-terminal hydrolase 13">
    <location>
        <begin position="1"/>
        <end position="858"/>
    </location>
</feature>
<feature type="domain" description="USP">
    <location>
        <begin position="334"/>
        <end position="856"/>
    </location>
</feature>
<feature type="domain" description="UBA 1" evidence="3">
    <location>
        <begin position="650"/>
        <end position="691"/>
    </location>
</feature>
<feature type="domain" description="UBA 2" evidence="3">
    <location>
        <begin position="722"/>
        <end position="762"/>
    </location>
</feature>
<feature type="zinc finger region" description="UBP-type; degenerate" evidence="4">
    <location>
        <begin position="185"/>
        <end position="293"/>
    </location>
</feature>
<feature type="active site" description="Nucleophile" evidence="5 6">
    <location>
        <position position="343"/>
    </location>
</feature>
<feature type="active site" description="Proton acceptor" evidence="5 6">
    <location>
        <position position="818"/>
    </location>
</feature>
<feature type="binding site" evidence="4">
    <location>
        <position position="209"/>
    </location>
    <ligand>
        <name>Zn(2+)</name>
        <dbReference type="ChEBI" id="CHEBI:29105"/>
    </ligand>
</feature>
<feature type="binding site" evidence="4">
    <location>
        <position position="212"/>
    </location>
    <ligand>
        <name>Zn(2+)</name>
        <dbReference type="ChEBI" id="CHEBI:29105"/>
    </ligand>
</feature>
<feature type="binding site" evidence="4">
    <location>
        <position position="229"/>
    </location>
    <ligand>
        <name>Zn(2+)</name>
        <dbReference type="ChEBI" id="CHEBI:29105"/>
    </ligand>
</feature>
<feature type="binding site" evidence="4">
    <location>
        <position position="242"/>
    </location>
    <ligand>
        <name>Zn(2+)</name>
        <dbReference type="ChEBI" id="CHEBI:29105"/>
    </ligand>
</feature>
<feature type="modified residue" description="Phosphoserine" evidence="2">
    <location>
        <position position="112"/>
    </location>
</feature>
<feature type="cross-link" description="Glycyl lysine isopeptide (Lys-Gly) (interchain with G-Cter in SUMO2)" evidence="2">
    <location>
        <position position="309"/>
    </location>
</feature>
<feature type="cross-link" description="Glycyl lysine isopeptide (Lys-Gly) (interchain with G-Cter in SUMO2)" evidence="2">
    <location>
        <position position="403"/>
    </location>
</feature>
<reference key="1">
    <citation type="journal article" date="2009" name="PLoS Biol.">
        <title>Lineage-specific biology revealed by a finished genome assembly of the mouse.</title>
        <authorList>
            <person name="Church D.M."/>
            <person name="Goodstadt L."/>
            <person name="Hillier L.W."/>
            <person name="Zody M.C."/>
            <person name="Goldstein S."/>
            <person name="She X."/>
            <person name="Bult C.J."/>
            <person name="Agarwala R."/>
            <person name="Cherry J.L."/>
            <person name="DiCuccio M."/>
            <person name="Hlavina W."/>
            <person name="Kapustin Y."/>
            <person name="Meric P."/>
            <person name="Maglott D."/>
            <person name="Birtle Z."/>
            <person name="Marques A.C."/>
            <person name="Graves T."/>
            <person name="Zhou S."/>
            <person name="Teague B."/>
            <person name="Potamousis K."/>
            <person name="Churas C."/>
            <person name="Place M."/>
            <person name="Herschleb J."/>
            <person name="Runnheim R."/>
            <person name="Forrest D."/>
            <person name="Amos-Landgraf J."/>
            <person name="Schwartz D.C."/>
            <person name="Cheng Z."/>
            <person name="Lindblad-Toh K."/>
            <person name="Eichler E.E."/>
            <person name="Ponting C.P."/>
        </authorList>
    </citation>
    <scope>NUCLEOTIDE SEQUENCE [LARGE SCALE GENOMIC DNA]</scope>
    <source>
        <strain>C57BL/6J</strain>
    </source>
</reference>
<reference key="2">
    <citation type="submission" date="2005-07" db="EMBL/GenBank/DDBJ databases">
        <authorList>
            <person name="Mural R.J."/>
            <person name="Adams M.D."/>
            <person name="Myers E.W."/>
            <person name="Smith H.O."/>
            <person name="Venter J.C."/>
        </authorList>
    </citation>
    <scope>NUCLEOTIDE SEQUENCE [LARGE SCALE GENOMIC DNA]</scope>
</reference>
<reference key="3">
    <citation type="journal article" date="2004" name="Genome Res.">
        <title>The status, quality, and expansion of the NIH full-length cDNA project: the Mammalian Gene Collection (MGC).</title>
        <authorList>
            <consortium name="The MGC Project Team"/>
        </authorList>
    </citation>
    <scope>NUCLEOTIDE SEQUENCE [LARGE SCALE MRNA]</scope>
    <source>
        <tissue>Heart</tissue>
    </source>
</reference>
<reference key="4">
    <citation type="journal article" date="2010" name="Cell">
        <title>A tissue-specific atlas of mouse protein phosphorylation and expression.</title>
        <authorList>
            <person name="Huttlin E.L."/>
            <person name="Jedrychowski M.P."/>
            <person name="Elias J.E."/>
            <person name="Goswami T."/>
            <person name="Rad R."/>
            <person name="Beausoleil S.A."/>
            <person name="Villen J."/>
            <person name="Haas W."/>
            <person name="Sowa M.E."/>
            <person name="Gygi S.P."/>
        </authorList>
    </citation>
    <scope>IDENTIFICATION BY MASS SPECTROMETRY [LARGE SCALE ANALYSIS]</scope>
    <source>
        <tissue>Heart</tissue>
    </source>
</reference>
<reference key="5">
    <citation type="journal article" date="2017" name="Nat. Commun.">
        <title>USP13 negatively regulates antiviral responses by deubiquitinating STING.</title>
        <authorList>
            <person name="Sun H."/>
            <person name="Zhang Q."/>
            <person name="Jing Y.Y."/>
            <person name="Zhang M."/>
            <person name="Wang H.Y."/>
            <person name="Cai Z."/>
            <person name="Liuyu T."/>
            <person name="Zhang Z.D."/>
            <person name="Xiong T.C."/>
            <person name="Wu Y."/>
            <person name="Zhu Q.Y."/>
            <person name="Yao J."/>
            <person name="Shu H.B."/>
            <person name="Lin D."/>
            <person name="Zhong B."/>
        </authorList>
    </citation>
    <scope>FUNCTION</scope>
    <scope>DISRUPTION PHENOTYPE</scope>
</reference>
<reference key="6">
    <citation type="journal article" date="2023" name="Am. J. Respir. Cell Mol. Biol.">
        <title>USP13 Deficiency Impairs Autophagy and Facilitates Age-related Lung Fibrosis.</title>
        <authorList>
            <person name="Liu Y."/>
            <person name="Li Z."/>
            <person name="Xiao H."/>
            <person name="Xie B."/>
            <person name="He J."/>
            <person name="Song M."/>
            <person name="Wang J."/>
            <person name="Geng J."/>
            <person name="Dai H."/>
            <person name="Wang C."/>
        </authorList>
    </citation>
    <scope>FUNCTION</scope>
    <scope>DISRUPTION PHENOTYPE</scope>
</reference>